<accession>Q14574</accession>
<accession>A6NN35</accession>
<accession>Q14200</accession>
<accession>Q9HAZ9</accession>
<proteinExistence type="evidence at protein level"/>
<dbReference type="EMBL" id="D17427">
    <property type="protein sequence ID" value="BAA04249.1"/>
    <property type="molecule type" value="mRNA"/>
</dbReference>
<dbReference type="EMBL" id="X83929">
    <property type="protein sequence ID" value="CAA58781.1"/>
    <property type="molecule type" value="mRNA"/>
</dbReference>
<dbReference type="EMBL" id="AF293359">
    <property type="protein sequence ID" value="AAG23426.1"/>
    <property type="molecule type" value="Genomic_DNA"/>
</dbReference>
<dbReference type="EMBL" id="AF293359">
    <property type="protein sequence ID" value="AAG23427.1"/>
    <property type="molecule type" value="Genomic_DNA"/>
</dbReference>
<dbReference type="EMBL" id="AC025212">
    <property type="status" value="NOT_ANNOTATED_CDS"/>
    <property type="molecule type" value="Genomic_DNA"/>
</dbReference>
<dbReference type="CCDS" id="CCDS32810.1">
    <molecule id="Q14574-1"/>
</dbReference>
<dbReference type="PIR" id="A55363">
    <property type="entry name" value="A55363"/>
</dbReference>
<dbReference type="RefSeq" id="NP_001932.2">
    <molecule id="Q14574-1"/>
    <property type="nucleotide sequence ID" value="NM_001941.5"/>
</dbReference>
<dbReference type="RefSeq" id="NP_077741.2">
    <molecule id="Q14574-2"/>
    <property type="nucleotide sequence ID" value="NM_024423.4"/>
</dbReference>
<dbReference type="SMR" id="Q14574"/>
<dbReference type="BioGRID" id="108159">
    <property type="interactions" value="140"/>
</dbReference>
<dbReference type="FunCoup" id="Q14574">
    <property type="interactions" value="444"/>
</dbReference>
<dbReference type="IntAct" id="Q14574">
    <property type="interactions" value="50"/>
</dbReference>
<dbReference type="MINT" id="Q14574"/>
<dbReference type="STRING" id="9606.ENSP00000353608"/>
<dbReference type="GlyCosmos" id="Q14574">
    <property type="glycosylation" value="4 sites, No reported glycans"/>
</dbReference>
<dbReference type="GlyGen" id="Q14574">
    <property type="glycosylation" value="5 sites, 2 N-linked glycans (3 sites), 1 O-linked glycan (1 site)"/>
</dbReference>
<dbReference type="iPTMnet" id="Q14574"/>
<dbReference type="PhosphoSitePlus" id="Q14574"/>
<dbReference type="SwissPalm" id="Q14574"/>
<dbReference type="BioMuta" id="DSC3"/>
<dbReference type="DMDM" id="116241342"/>
<dbReference type="jPOST" id="Q14574"/>
<dbReference type="MassIVE" id="Q14574"/>
<dbReference type="PaxDb" id="9606-ENSP00000353608"/>
<dbReference type="PeptideAtlas" id="Q14574"/>
<dbReference type="ProteomicsDB" id="60052">
    <molecule id="Q14574-1"/>
</dbReference>
<dbReference type="ProteomicsDB" id="60053">
    <molecule id="Q14574-2"/>
</dbReference>
<dbReference type="TopDownProteomics" id="Q14574-1">
    <molecule id="Q14574-1"/>
</dbReference>
<dbReference type="Antibodypedia" id="7988">
    <property type="antibodies" value="246 antibodies from 33 providers"/>
</dbReference>
<dbReference type="DNASU" id="1825"/>
<dbReference type="Ensembl" id="ENST00000360428.9">
    <molecule id="Q14574-1"/>
    <property type="protein sequence ID" value="ENSP00000353608.4"/>
    <property type="gene ID" value="ENSG00000134762.17"/>
</dbReference>
<dbReference type="Ensembl" id="ENST00000434452.5">
    <molecule id="Q14574-2"/>
    <property type="protein sequence ID" value="ENSP00000392068.1"/>
    <property type="gene ID" value="ENSG00000134762.17"/>
</dbReference>
<dbReference type="GeneID" id="1825"/>
<dbReference type="KEGG" id="hsa:1825"/>
<dbReference type="MANE-Select" id="ENST00000360428.9">
    <property type="protein sequence ID" value="ENSP00000353608.4"/>
    <property type="RefSeq nucleotide sequence ID" value="NM_001941.5"/>
    <property type="RefSeq protein sequence ID" value="NP_001932.2"/>
</dbReference>
<dbReference type="UCSC" id="uc002kwi.4">
    <molecule id="Q14574-1"/>
    <property type="organism name" value="human"/>
</dbReference>
<dbReference type="AGR" id="HGNC:3037"/>
<dbReference type="CTD" id="1825"/>
<dbReference type="DisGeNET" id="1825"/>
<dbReference type="GeneCards" id="DSC3"/>
<dbReference type="HGNC" id="HGNC:3037">
    <property type="gene designation" value="DSC3"/>
</dbReference>
<dbReference type="HPA" id="ENSG00000134762">
    <property type="expression patterns" value="Group enriched (esophagus, skin)"/>
</dbReference>
<dbReference type="MalaCards" id="DSC3"/>
<dbReference type="MIM" id="600271">
    <property type="type" value="gene"/>
</dbReference>
<dbReference type="MIM" id="613102">
    <property type="type" value="phenotype"/>
</dbReference>
<dbReference type="neXtProt" id="NX_Q14574"/>
<dbReference type="OpenTargets" id="ENSG00000134762"/>
<dbReference type="Orphanet" id="217407">
    <property type="disease" value="Hereditary hypotrichosis with recurrent skin vesicles"/>
</dbReference>
<dbReference type="PharmGKB" id="PA164741482"/>
<dbReference type="VEuPathDB" id="HostDB:ENSG00000134762"/>
<dbReference type="eggNOG" id="KOG3594">
    <property type="taxonomic scope" value="Eukaryota"/>
</dbReference>
<dbReference type="GeneTree" id="ENSGT01030000234624"/>
<dbReference type="HOGENOM" id="CLU_005284_2_0_1"/>
<dbReference type="InParanoid" id="Q14574"/>
<dbReference type="OMA" id="VICKQKM"/>
<dbReference type="OrthoDB" id="6079678at2759"/>
<dbReference type="PAN-GO" id="Q14574">
    <property type="GO annotations" value="4 GO annotations based on evolutionary models"/>
</dbReference>
<dbReference type="PhylomeDB" id="Q14574"/>
<dbReference type="TreeFam" id="TF316817"/>
<dbReference type="PathwayCommons" id="Q14574"/>
<dbReference type="Reactome" id="R-HSA-6805567">
    <property type="pathway name" value="Keratinization"/>
</dbReference>
<dbReference type="Reactome" id="R-HSA-6809371">
    <property type="pathway name" value="Formation of the cornified envelope"/>
</dbReference>
<dbReference type="SignaLink" id="Q14574"/>
<dbReference type="BioGRID-ORCS" id="1825">
    <property type="hits" value="12 hits in 1159 CRISPR screens"/>
</dbReference>
<dbReference type="ChiTaRS" id="DSC3">
    <property type="organism name" value="human"/>
</dbReference>
<dbReference type="GeneWiki" id="DSC3"/>
<dbReference type="GenomeRNAi" id="1825"/>
<dbReference type="Pharos" id="Q14574">
    <property type="development level" value="Tbio"/>
</dbReference>
<dbReference type="PRO" id="PR:Q14574"/>
<dbReference type="Proteomes" id="UP000005640">
    <property type="component" value="Chromosome 18"/>
</dbReference>
<dbReference type="RNAct" id="Q14574">
    <property type="molecule type" value="protein"/>
</dbReference>
<dbReference type="Bgee" id="ENSG00000134762">
    <property type="expression patterns" value="Expressed in upper leg skin and 116 other cell types or tissues"/>
</dbReference>
<dbReference type="ExpressionAtlas" id="Q14574">
    <property type="expression patterns" value="baseline and differential"/>
</dbReference>
<dbReference type="GO" id="GO:0030054">
    <property type="term" value="C:cell junction"/>
    <property type="evidence" value="ECO:0000314"/>
    <property type="project" value="HPA"/>
</dbReference>
<dbReference type="GO" id="GO:0005911">
    <property type="term" value="C:cell-cell junction"/>
    <property type="evidence" value="ECO:0000304"/>
    <property type="project" value="ProtInc"/>
</dbReference>
<dbReference type="GO" id="GO:0001533">
    <property type="term" value="C:cornified envelope"/>
    <property type="evidence" value="ECO:0000304"/>
    <property type="project" value="Reactome"/>
</dbReference>
<dbReference type="GO" id="GO:0005737">
    <property type="term" value="C:cytoplasm"/>
    <property type="evidence" value="ECO:0007669"/>
    <property type="project" value="Ensembl"/>
</dbReference>
<dbReference type="GO" id="GO:0030057">
    <property type="term" value="C:desmosome"/>
    <property type="evidence" value="ECO:0000318"/>
    <property type="project" value="GO_Central"/>
</dbReference>
<dbReference type="GO" id="GO:0005576">
    <property type="term" value="C:extracellular region"/>
    <property type="evidence" value="ECO:0007669"/>
    <property type="project" value="Ensembl"/>
</dbReference>
<dbReference type="GO" id="GO:0016020">
    <property type="term" value="C:membrane"/>
    <property type="evidence" value="ECO:0000304"/>
    <property type="project" value="ProtInc"/>
</dbReference>
<dbReference type="GO" id="GO:0005886">
    <property type="term" value="C:plasma membrane"/>
    <property type="evidence" value="ECO:0000314"/>
    <property type="project" value="HPA"/>
</dbReference>
<dbReference type="GO" id="GO:0005509">
    <property type="term" value="F:calcium ion binding"/>
    <property type="evidence" value="ECO:0000318"/>
    <property type="project" value="GO_Central"/>
</dbReference>
<dbReference type="GO" id="GO:0045295">
    <property type="term" value="F:gamma-catenin binding"/>
    <property type="evidence" value="ECO:0000353"/>
    <property type="project" value="BHF-UCL"/>
</dbReference>
<dbReference type="GO" id="GO:0007155">
    <property type="term" value="P:cell adhesion"/>
    <property type="evidence" value="ECO:0000304"/>
    <property type="project" value="ProtInc"/>
</dbReference>
<dbReference type="GO" id="GO:0098609">
    <property type="term" value="P:cell-cell adhesion"/>
    <property type="evidence" value="ECO:0000318"/>
    <property type="project" value="GO_Central"/>
</dbReference>
<dbReference type="GO" id="GO:0090136">
    <property type="term" value="P:epithelial cell-cell adhesion"/>
    <property type="evidence" value="ECO:0007669"/>
    <property type="project" value="Ensembl"/>
</dbReference>
<dbReference type="GO" id="GO:0007156">
    <property type="term" value="P:homophilic cell adhesion via plasma membrane adhesion molecules"/>
    <property type="evidence" value="ECO:0007669"/>
    <property type="project" value="InterPro"/>
</dbReference>
<dbReference type="GO" id="GO:0001701">
    <property type="term" value="P:in utero embryonic development"/>
    <property type="evidence" value="ECO:0007669"/>
    <property type="project" value="Ensembl"/>
</dbReference>
<dbReference type="GO" id="GO:0050821">
    <property type="term" value="P:protein stabilization"/>
    <property type="evidence" value="ECO:0000314"/>
    <property type="project" value="BHF-UCL"/>
</dbReference>
<dbReference type="CDD" id="cd11304">
    <property type="entry name" value="Cadherin_repeat"/>
    <property type="match status" value="3"/>
</dbReference>
<dbReference type="FunFam" id="2.60.40.60:FF:000011">
    <property type="entry name" value="Cadherin 1"/>
    <property type="match status" value="1"/>
</dbReference>
<dbReference type="FunFam" id="2.60.40.60:FF:000019">
    <property type="entry name" value="Cadherin 2"/>
    <property type="match status" value="1"/>
</dbReference>
<dbReference type="FunFam" id="2.60.40.60:FF:000027">
    <property type="entry name" value="Cadherin 2"/>
    <property type="match status" value="1"/>
</dbReference>
<dbReference type="FunFam" id="2.60.40.60:FF:000031">
    <property type="entry name" value="Cadherin 3"/>
    <property type="match status" value="1"/>
</dbReference>
<dbReference type="FunFam" id="2.60.40.60:FF:000091">
    <property type="entry name" value="Desmocollin 1"/>
    <property type="match status" value="1"/>
</dbReference>
<dbReference type="FunFam" id="2.60.40.60:FF:000096">
    <property type="entry name" value="Desmocollin 2"/>
    <property type="match status" value="1"/>
</dbReference>
<dbReference type="FunFam" id="4.10.900.10:FF:000005">
    <property type="entry name" value="Desmocollin 2"/>
    <property type="match status" value="1"/>
</dbReference>
<dbReference type="Gene3D" id="2.60.40.60">
    <property type="entry name" value="Cadherins"/>
    <property type="match status" value="6"/>
</dbReference>
<dbReference type="Gene3D" id="4.10.900.10">
    <property type="entry name" value="TCF3-CBD (Catenin binding domain)"/>
    <property type="match status" value="1"/>
</dbReference>
<dbReference type="InterPro" id="IPR050971">
    <property type="entry name" value="Cadherin-domain_protein"/>
</dbReference>
<dbReference type="InterPro" id="IPR002126">
    <property type="entry name" value="Cadherin-like_dom"/>
</dbReference>
<dbReference type="InterPro" id="IPR015919">
    <property type="entry name" value="Cadherin-like_sf"/>
</dbReference>
<dbReference type="InterPro" id="IPR020894">
    <property type="entry name" value="Cadherin_CS"/>
</dbReference>
<dbReference type="InterPro" id="IPR014868">
    <property type="entry name" value="Cadherin_pro_dom"/>
</dbReference>
<dbReference type="InterPro" id="IPR000233">
    <property type="entry name" value="Cadherin_Y-type_LIR"/>
</dbReference>
<dbReference type="InterPro" id="IPR027397">
    <property type="entry name" value="Catenin-bd_sf"/>
</dbReference>
<dbReference type="InterPro" id="IPR009122">
    <property type="entry name" value="Desmosomal_cadherin"/>
</dbReference>
<dbReference type="PANTHER" id="PTHR24025:SF12">
    <property type="entry name" value="DESMOCOLLIN-3"/>
    <property type="match status" value="1"/>
</dbReference>
<dbReference type="PANTHER" id="PTHR24025">
    <property type="entry name" value="DESMOGLEIN FAMILY MEMBER"/>
    <property type="match status" value="1"/>
</dbReference>
<dbReference type="Pfam" id="PF01049">
    <property type="entry name" value="CADH_Y-type_LIR"/>
    <property type="match status" value="1"/>
</dbReference>
<dbReference type="Pfam" id="PF00028">
    <property type="entry name" value="Cadherin"/>
    <property type="match status" value="4"/>
</dbReference>
<dbReference type="Pfam" id="PF08758">
    <property type="entry name" value="Cadherin_pro"/>
    <property type="match status" value="1"/>
</dbReference>
<dbReference type="PRINTS" id="PR00205">
    <property type="entry name" value="CADHERIN"/>
</dbReference>
<dbReference type="PRINTS" id="PR01818">
    <property type="entry name" value="DESMOCADHERN"/>
</dbReference>
<dbReference type="PRINTS" id="PR01820">
    <property type="entry name" value="DESMOCOLLIN"/>
</dbReference>
<dbReference type="SMART" id="SM00112">
    <property type="entry name" value="CA"/>
    <property type="match status" value="5"/>
</dbReference>
<dbReference type="SMART" id="SM01055">
    <property type="entry name" value="Cadherin_pro"/>
    <property type="match status" value="1"/>
</dbReference>
<dbReference type="SUPFAM" id="SSF49313">
    <property type="entry name" value="Cadherin-like"/>
    <property type="match status" value="6"/>
</dbReference>
<dbReference type="PROSITE" id="PS00232">
    <property type="entry name" value="CADHERIN_1"/>
    <property type="match status" value="3"/>
</dbReference>
<dbReference type="PROSITE" id="PS50268">
    <property type="entry name" value="CADHERIN_2"/>
    <property type="match status" value="5"/>
</dbReference>
<sequence>MAAAGPRRSVRGAVCLHLLLTLVIFSRAGEACKKVILNVPSKLEADKIIGRVNLEECFRSADLIRSSDPDFRVLNDGSVYTARAVALSDKKRSFTIWLSDKRKQTQKEVTVLLEHQKKVSKTRHTRETVLRRAKRRWAPIPCSMQENSLGPFPLFLQQVESDAAQNYTVFYSISGRGVDKEPLNLFYIERDTGNLFCTRPVDREEYDVFDLIAYASTADGYSADLPLPLPIRVEDENDNHPVFTEAIYNFEVLESSRPGTTVGVVCATDRDEPDTMHTRLKYSILQQTPRSPGLFSVHPSTGVITTVSHYLDREVVDKYSLIMKVQDMDGQFFGLIGTSTCIITVTDSNDNAPTFRQNAYEAFVEENAFNVEILRIPIEDKDLINTANWRVNFTILKGNENGHFKISTDKETNEGVLSVVKPLNYEENRQVNLEIGVNNEAPFARDIPRVTALNRALVTVHVRDLDEGPECTPAAQYVRIKENLAVGSKINGYKAYDPENRNGNGLRYKKLHDPKGWITIDEISGSIITSKILDREVETPKNELYNITVLAIDKDDRSCTGTLAVNIEDVNDNPPEILQEYVVICKPKMGYTDILAVDPDEPVHGAPFYFSLPNTSPEISRLWSLTKVNDTAARLSYQKNAGFQEYTIPITVKDRAGQAATKLLRVNLCECTHPTQCRATSRSTGVILGKWAILAILLGIALLFSVLLTLVCGVFGATKGKRFPEDLAQQNLIISNTEAPGDDRVCSANGFMTQTTNNSSQGFCGTMGSGMKNGGQETIEMMKGGNQTLESCRGAGHHHTLDSCRGGHTEVDNCRYTYSEWHSFTQPRLGEKLHRCNQNEDRMPSQDYVLTYNYEGRGSPAGSVGCCSEKQEEDGLDFLNNLEPKFITLAEACTKR</sequence>
<comment type="function">
    <text evidence="2 6">A component of desmosome cell-cell junctions which are required for positive regulation of cellular adhesion (By similarity). Required for cell-cell adhesion in the epidermis, as a result required for the maintenance of the dermal cohesion and the dermal barrier function (PubMed:19717567). Required for cell-cell adhesion of epithelial cell layers surrounding the telogen hair club, as a result plays an important role in telogen hair shaft anchorage (By similarity). Essential for successful completion of embryo compaction and embryo development (By similarity).</text>
</comment>
<comment type="subunit">
    <text evidence="6">May form homodimers (PubMed:19717567). Interacts with DSG1; there is evidence to suggest that the interaction promotes cell-cell adhesion of keratinocytes (PubMed:19717567).</text>
</comment>
<comment type="subcellular location">
    <subcellularLocation>
        <location evidence="6 9">Cell membrane</location>
        <topology evidence="10">Single-pass type I membrane protein</topology>
    </subcellularLocation>
    <subcellularLocation>
        <location evidence="2">Cell junction</location>
        <location evidence="2">Desmosome</location>
    </subcellularLocation>
    <subcellularLocation>
        <location evidence="2">Cytoplasm</location>
    </subcellularLocation>
    <text evidence="2">Expressed in the cytoplasm and at the cell membrane of oocytes.</text>
</comment>
<comment type="alternative products">
    <event type="alternative splicing"/>
    <isoform>
        <id>Q14574-1</id>
        <name>3A</name>
        <sequence type="displayed"/>
    </isoform>
    <isoform>
        <id>Q14574-2</id>
        <name>3B</name>
        <sequence type="described" ref="VSP_000663 VSP_000664"/>
    </isoform>
</comment>
<comment type="tissue specificity">
    <text evidence="6 9">Expressed throughout the basal and spinous layer of the epidermis with weak expression in the granular layer (at protein level) (PubMed:19717567, PubMed:7665906). Also expressed in the buccal mucosa, esophagus and cervix (at protein level) (PubMed:7665906).</text>
</comment>
<comment type="induction">
    <text evidence="8">Induced in the hours following cyclic mechanical strain in keratinocytes.</text>
</comment>
<comment type="domain">
    <text evidence="10">Calcium may be bound by the cadherin-like repeats.</text>
</comment>
<comment type="domain">
    <text evidence="1">Three calcium ions are usually bound at the interface of each cadherin domain and rigidify the connections, imparting a strong curvature to the full-length ectodomain.</text>
</comment>
<comment type="disease" evidence="7">
    <disease id="DI-02555">
        <name>Hypotrichosis and recurrent skin vesicles</name>
        <acronym>HRSV</acronym>
        <description>A disorder characterized by hypotrichosis and the appearance of recurrent skin vesicle formation. Affected individuals show sparse and fragile hair on scalp, as well as absent eyebrows and eyelashes. Vesicles filled with thin, watery fluid are observed on the scalp and skin of most of the body. Mucosal vesicles are absent.</description>
        <dbReference type="MIM" id="613102"/>
    </disease>
    <text>The disease is caused by variants affecting the gene represented in this entry.</text>
</comment>
<comment type="miscellaneous">
    <text evidence="6">There is some evidence to suggest that pemphigus vulgaris antibodies may disrupt cell-cell adhesion via interfering with the interaction between DSC3 and DSG1.</text>
</comment>
<evidence type="ECO:0000250" key="1"/>
<evidence type="ECO:0000250" key="2">
    <source>
        <dbReference type="UniProtKB" id="P55850"/>
    </source>
</evidence>
<evidence type="ECO:0000255" key="3"/>
<evidence type="ECO:0000255" key="4">
    <source>
        <dbReference type="PROSITE-ProRule" id="PRU00043"/>
    </source>
</evidence>
<evidence type="ECO:0000269" key="5">
    <source>
    </source>
</evidence>
<evidence type="ECO:0000269" key="6">
    <source>
    </source>
</evidence>
<evidence type="ECO:0000269" key="7">
    <source>
    </source>
</evidence>
<evidence type="ECO:0000269" key="8">
    <source>
    </source>
</evidence>
<evidence type="ECO:0000269" key="9">
    <source>
    </source>
</evidence>
<evidence type="ECO:0000305" key="10"/>
<keyword id="KW-0025">Alternative splicing</keyword>
<keyword id="KW-0106">Calcium</keyword>
<keyword id="KW-0130">Cell adhesion</keyword>
<keyword id="KW-0965">Cell junction</keyword>
<keyword id="KW-1003">Cell membrane</keyword>
<keyword id="KW-0165">Cleavage on pair of basic residues</keyword>
<keyword id="KW-0963">Cytoplasm</keyword>
<keyword id="KW-0903">Direct protein sequencing</keyword>
<keyword id="KW-0325">Glycoprotein</keyword>
<keyword id="KW-1063">Hypotrichosis</keyword>
<keyword id="KW-0472">Membrane</keyword>
<keyword id="KW-0479">Metal-binding</keyword>
<keyword id="KW-1267">Proteomics identification</keyword>
<keyword id="KW-1185">Reference proteome</keyword>
<keyword id="KW-0677">Repeat</keyword>
<keyword id="KW-0732">Signal</keyword>
<keyword id="KW-0812">Transmembrane</keyword>
<keyword id="KW-1133">Transmembrane helix</keyword>
<reference key="1">
    <citation type="journal article" date="1994" name="J. Biol. Chem.">
        <title>cDNA cloning and expression of a novel human desmocollin.</title>
        <authorList>
            <person name="Kawamura K."/>
            <person name="Watanabe K."/>
            <person name="Suzuki T."/>
            <person name="Yamakawa T."/>
            <person name="Kamiyama T."/>
            <person name="Nakagawa H."/>
            <person name="Tsurufuji S."/>
        </authorList>
    </citation>
    <scope>NUCLEOTIDE SEQUENCE [MRNA] (ISOFORM 3A)</scope>
    <scope>PARTIAL PROTEIN SEQUENCE</scope>
    <source>
        <tissue>Urinary bladder carcinoma</tissue>
    </source>
</reference>
<reference key="2">
    <citation type="journal article" date="1995" name="J. Invest. Dermatol.">
        <title>The desmocollins of human foreskin epidermis: identification and chromosomal assignment of a third gene and expression patterns of the three isoforms.</title>
        <authorList>
            <person name="King I.A."/>
            <person name="Sullivan K.H."/>
            <person name="Bennett R. Jr."/>
            <person name="Buxton R.S."/>
        </authorList>
    </citation>
    <scope>NUCLEOTIDE SEQUENCE [MRNA] (ISOFORM 3A)</scope>
    <scope>SUBCELLULAR LOCATION</scope>
    <scope>TISSUE SPECIFICITY</scope>
    <scope>VARIANT ASP-28</scope>
    <source>
        <tissue>Foreskin</tissue>
        <tissue>Keratinocyte</tissue>
    </source>
</reference>
<reference key="3">
    <citation type="journal article" date="2000" name="Biochem. Biophys. Res. Commun.">
        <title>Genomic organization and amplification of the human desmosomal cadherin genes DSC1 and DSC3, encoding desmocollin types 1 and 3.</title>
        <authorList>
            <person name="Whittock N.V."/>
            <person name="Hunt D.M."/>
            <person name="Rickman L."/>
            <person name="Malhi S."/>
            <person name="Vogazianou A.P."/>
            <person name="Dawson L.F."/>
            <person name="Eady R.A.J."/>
            <person name="Buxton R.S."/>
            <person name="McGrath J.A."/>
        </authorList>
    </citation>
    <scope>NUCLEOTIDE SEQUENCE [GENOMIC DNA] (ISOFORMS 3A AND 3B)</scope>
    <scope>VARIANT ASP-28</scope>
</reference>
<reference key="4">
    <citation type="journal article" date="2005" name="Nature">
        <title>DNA sequence and analysis of human chromosome 18.</title>
        <authorList>
            <person name="Nusbaum C."/>
            <person name="Zody M.C."/>
            <person name="Borowsky M.L."/>
            <person name="Kamal M."/>
            <person name="Kodira C.D."/>
            <person name="Taylor T.D."/>
            <person name="Whittaker C.A."/>
            <person name="Chang J.L."/>
            <person name="Cuomo C.A."/>
            <person name="Dewar K."/>
            <person name="FitzGerald M.G."/>
            <person name="Yang X."/>
            <person name="Abouelleil A."/>
            <person name="Allen N.R."/>
            <person name="Anderson S."/>
            <person name="Bloom T."/>
            <person name="Bugalter B."/>
            <person name="Butler J."/>
            <person name="Cook A."/>
            <person name="DeCaprio D."/>
            <person name="Engels R."/>
            <person name="Garber M."/>
            <person name="Gnirke A."/>
            <person name="Hafez N."/>
            <person name="Hall J.L."/>
            <person name="Norman C.H."/>
            <person name="Itoh T."/>
            <person name="Jaffe D.B."/>
            <person name="Kuroki Y."/>
            <person name="Lehoczky J."/>
            <person name="Lui A."/>
            <person name="Macdonald P."/>
            <person name="Mauceli E."/>
            <person name="Mikkelsen T.S."/>
            <person name="Naylor J.W."/>
            <person name="Nicol R."/>
            <person name="Nguyen C."/>
            <person name="Noguchi H."/>
            <person name="O'Leary S.B."/>
            <person name="Piqani B."/>
            <person name="Smith C.L."/>
            <person name="Talamas J.A."/>
            <person name="Topham K."/>
            <person name="Totoki Y."/>
            <person name="Toyoda A."/>
            <person name="Wain H.M."/>
            <person name="Young S.K."/>
            <person name="Zeng Q."/>
            <person name="Zimmer A.R."/>
            <person name="Fujiyama A."/>
            <person name="Hattori M."/>
            <person name="Birren B.W."/>
            <person name="Sakaki Y."/>
            <person name="Lander E.S."/>
        </authorList>
    </citation>
    <scope>NUCLEOTIDE SEQUENCE [LARGE SCALE GENOMIC DNA]</scope>
</reference>
<reference key="5">
    <citation type="journal article" date="2009" name="J. Biol. Chem.">
        <title>Desmocollin 3-mediated binding is crucial for keratinocyte cohesion and is impaired in pemphigus.</title>
        <authorList>
            <person name="Spindler V."/>
            <person name="Heupel W.M."/>
            <person name="Efthymiadis A."/>
            <person name="Schmidt E."/>
            <person name="Eming R."/>
            <person name="Rankl C."/>
            <person name="Hinterdorfer P."/>
            <person name="Mueller T."/>
            <person name="Drenckhahn D."/>
            <person name="Waschke J."/>
        </authorList>
    </citation>
    <scope>FUNCTION</scope>
    <scope>SUBUNIT</scope>
    <scope>INTERACTION WITH DSG1</scope>
    <scope>SUBCELLULAR LOCATION</scope>
    <scope>TISSUE SPECIFICITY</scope>
</reference>
<reference key="6">
    <citation type="journal article" date="2019" name="Int. J. Mol. Sci.">
        <title>Evidence for the Desmosomal Cadherin Desmoglein-3 in Regulating YAP and Phospho-YAP in Keratinocyte Responses to Mechanical Forces.</title>
        <authorList>
            <person name="Uttagomol J."/>
            <person name="Ahmad U.S."/>
            <person name="Rehman A."/>
            <person name="Huang Y."/>
            <person name="Laly A.C."/>
            <person name="Kang A."/>
            <person name="Soetaert J."/>
            <person name="Chance R."/>
            <person name="Teh M.T."/>
            <person name="Connelly J.T."/>
            <person name="Wan H."/>
        </authorList>
    </citation>
    <scope>INDUCTION</scope>
</reference>
<reference key="7">
    <citation type="journal article" date="2009" name="Am. J. Hum. Genet.">
        <title>A homozygous nonsense mutation in the human desmocollin-3 (DSC3) gene underlies hereditary hypotrichosis and recurrent skin vesicles.</title>
        <authorList>
            <person name="Ayub M."/>
            <person name="Basit S."/>
            <person name="Jelani M."/>
            <person name="Ur Rehman F."/>
            <person name="Iqbal M."/>
            <person name="Yasinzai M."/>
            <person name="Ahmad W."/>
        </authorList>
    </citation>
    <scope>INVOLVEMENT IN HRSV</scope>
</reference>
<gene>
    <name type="primary">DSC3</name>
    <name type="synonym">CDHF3</name>
    <name type="synonym">DSC4</name>
</gene>
<feature type="signal peptide" evidence="3">
    <location>
        <begin position="1"/>
        <end position="27"/>
    </location>
</feature>
<feature type="propeptide" id="PRO_0000003875" evidence="3">
    <location>
        <begin position="28"/>
        <end position="135"/>
    </location>
</feature>
<feature type="chain" id="PRO_0000003876" description="Desmocollin-3">
    <location>
        <begin position="136"/>
        <end position="896"/>
    </location>
</feature>
<feature type="topological domain" description="Extracellular" evidence="3">
    <location>
        <begin position="136"/>
        <end position="690"/>
    </location>
</feature>
<feature type="transmembrane region" description="Helical" evidence="3">
    <location>
        <begin position="691"/>
        <end position="711"/>
    </location>
</feature>
<feature type="topological domain" description="Cytoplasmic" evidence="3">
    <location>
        <begin position="712"/>
        <end position="896"/>
    </location>
</feature>
<feature type="domain" description="Cadherin 1" evidence="4">
    <location>
        <begin position="136"/>
        <end position="243"/>
    </location>
</feature>
<feature type="domain" description="Cadherin 2" evidence="4">
    <location>
        <begin position="244"/>
        <end position="355"/>
    </location>
</feature>
<feature type="domain" description="Cadherin 3" evidence="4">
    <location>
        <begin position="356"/>
        <end position="471"/>
    </location>
</feature>
<feature type="domain" description="Cadherin 4" evidence="4">
    <location>
        <begin position="472"/>
        <end position="579"/>
    </location>
</feature>
<feature type="domain" description="Cadherin 5" evidence="4">
    <location>
        <begin position="580"/>
        <end position="690"/>
    </location>
</feature>
<feature type="glycosylation site" description="N-linked (GlcNAc...) asparagine" evidence="3">
    <location>
        <position position="166"/>
    </location>
</feature>
<feature type="glycosylation site" description="N-linked (GlcNAc...) asparagine" evidence="3">
    <location>
        <position position="392"/>
    </location>
</feature>
<feature type="glycosylation site" description="N-linked (GlcNAc...) asparagine" evidence="3">
    <location>
        <position position="546"/>
    </location>
</feature>
<feature type="glycosylation site" description="N-linked (GlcNAc...) asparagine" evidence="3">
    <location>
        <position position="629"/>
    </location>
</feature>
<feature type="splice variant" id="VSP_000663" description="In isoform 3B." evidence="10">
    <original>KLHRCNQN</original>
    <variation>ESIRGHTG</variation>
    <location>
        <begin position="832"/>
        <end position="839"/>
    </location>
</feature>
<feature type="splice variant" id="VSP_000664" description="In isoform 3B." evidence="10">
    <location>
        <begin position="840"/>
        <end position="896"/>
    </location>
</feature>
<feature type="sequence variant" id="VAR_048515" description="In dbSNP:rs2852003." evidence="5 9">
    <original>A</original>
    <variation>D</variation>
    <location>
        <position position="28"/>
    </location>
</feature>
<feature type="sequence variant" id="VAR_048516" description="In dbSNP:rs276937.">
    <original>S</original>
    <variation>T</variation>
    <location>
        <position position="78"/>
    </location>
</feature>
<feature type="sequence variant" id="VAR_048517" description="In dbSNP:rs276938.">
    <original>R</original>
    <variation>K</variation>
    <location>
        <position position="102"/>
    </location>
</feature>
<feature type="sequence variant" id="VAR_048518" description="In dbSNP:rs35296997.">
    <original>K</original>
    <variation>Q</variation>
    <location>
        <position position="180"/>
    </location>
</feature>
<feature type="sequence variant" id="VAR_048519" description="In dbSNP:rs276921.">
    <original>R</original>
    <variation>W</variation>
    <location>
        <position position="199"/>
    </location>
</feature>
<feature type="sequence variant" id="VAR_048520" description="In dbSNP:rs35630063.">
    <original>N</original>
    <variation>S</variation>
    <location>
        <position position="239"/>
    </location>
</feature>
<protein>
    <recommendedName>
        <fullName>Desmocollin-3</fullName>
    </recommendedName>
    <alternativeName>
        <fullName>Cadherin family member 3</fullName>
    </alternativeName>
    <alternativeName>
        <fullName>Desmocollin-4</fullName>
    </alternativeName>
    <alternativeName>
        <fullName>HT-CP</fullName>
    </alternativeName>
</protein>
<organism>
    <name type="scientific">Homo sapiens</name>
    <name type="common">Human</name>
    <dbReference type="NCBI Taxonomy" id="9606"/>
    <lineage>
        <taxon>Eukaryota</taxon>
        <taxon>Metazoa</taxon>
        <taxon>Chordata</taxon>
        <taxon>Craniata</taxon>
        <taxon>Vertebrata</taxon>
        <taxon>Euteleostomi</taxon>
        <taxon>Mammalia</taxon>
        <taxon>Eutheria</taxon>
        <taxon>Euarchontoglires</taxon>
        <taxon>Primates</taxon>
        <taxon>Haplorrhini</taxon>
        <taxon>Catarrhini</taxon>
        <taxon>Hominidae</taxon>
        <taxon>Homo</taxon>
    </lineage>
</organism>
<name>DSC3_HUMAN</name>